<evidence type="ECO:0000255" key="1">
    <source>
        <dbReference type="HAMAP-Rule" id="MF_00204"/>
    </source>
</evidence>
<name>UVRB_STRT1</name>
<gene>
    <name evidence="1" type="primary">uvrB</name>
    <name type="ordered locus">str1497</name>
</gene>
<protein>
    <recommendedName>
        <fullName evidence="1">UvrABC system protein B</fullName>
        <shortName evidence="1">Protein UvrB</shortName>
    </recommendedName>
    <alternativeName>
        <fullName evidence="1">Excinuclease ABC subunit B</fullName>
    </alternativeName>
</protein>
<keyword id="KW-0067">ATP-binding</keyword>
<keyword id="KW-0963">Cytoplasm</keyword>
<keyword id="KW-0227">DNA damage</keyword>
<keyword id="KW-0228">DNA excision</keyword>
<keyword id="KW-0234">DNA repair</keyword>
<keyword id="KW-0267">Excision nuclease</keyword>
<keyword id="KW-0547">Nucleotide-binding</keyword>
<keyword id="KW-0742">SOS response</keyword>
<accession>Q5LYS1</accession>
<organism>
    <name type="scientific">Streptococcus thermophilus (strain CNRZ 1066)</name>
    <dbReference type="NCBI Taxonomy" id="299768"/>
    <lineage>
        <taxon>Bacteria</taxon>
        <taxon>Bacillati</taxon>
        <taxon>Bacillota</taxon>
        <taxon>Bacilli</taxon>
        <taxon>Lactobacillales</taxon>
        <taxon>Streptococcaceae</taxon>
        <taxon>Streptococcus</taxon>
    </lineage>
</organism>
<dbReference type="EMBL" id="CP000024">
    <property type="protein sequence ID" value="AAV63028.1"/>
    <property type="molecule type" value="Genomic_DNA"/>
</dbReference>
<dbReference type="SMR" id="Q5LYS1"/>
<dbReference type="KEGG" id="stc:str1497"/>
<dbReference type="HOGENOM" id="CLU_009621_2_1_9"/>
<dbReference type="GO" id="GO:0005737">
    <property type="term" value="C:cytoplasm"/>
    <property type="evidence" value="ECO:0007669"/>
    <property type="project" value="UniProtKB-SubCell"/>
</dbReference>
<dbReference type="GO" id="GO:0009380">
    <property type="term" value="C:excinuclease repair complex"/>
    <property type="evidence" value="ECO:0007669"/>
    <property type="project" value="InterPro"/>
</dbReference>
<dbReference type="GO" id="GO:0005524">
    <property type="term" value="F:ATP binding"/>
    <property type="evidence" value="ECO:0007669"/>
    <property type="project" value="UniProtKB-UniRule"/>
</dbReference>
<dbReference type="GO" id="GO:0016887">
    <property type="term" value="F:ATP hydrolysis activity"/>
    <property type="evidence" value="ECO:0007669"/>
    <property type="project" value="InterPro"/>
</dbReference>
<dbReference type="GO" id="GO:0003677">
    <property type="term" value="F:DNA binding"/>
    <property type="evidence" value="ECO:0007669"/>
    <property type="project" value="UniProtKB-UniRule"/>
</dbReference>
<dbReference type="GO" id="GO:0009381">
    <property type="term" value="F:excinuclease ABC activity"/>
    <property type="evidence" value="ECO:0007669"/>
    <property type="project" value="UniProtKB-UniRule"/>
</dbReference>
<dbReference type="GO" id="GO:0006289">
    <property type="term" value="P:nucleotide-excision repair"/>
    <property type="evidence" value="ECO:0007669"/>
    <property type="project" value="UniProtKB-UniRule"/>
</dbReference>
<dbReference type="GO" id="GO:0009432">
    <property type="term" value="P:SOS response"/>
    <property type="evidence" value="ECO:0007669"/>
    <property type="project" value="UniProtKB-UniRule"/>
</dbReference>
<dbReference type="CDD" id="cd17916">
    <property type="entry name" value="DEXHc_UvrB"/>
    <property type="match status" value="1"/>
</dbReference>
<dbReference type="CDD" id="cd18790">
    <property type="entry name" value="SF2_C_UvrB"/>
    <property type="match status" value="1"/>
</dbReference>
<dbReference type="Gene3D" id="3.40.50.300">
    <property type="entry name" value="P-loop containing nucleotide triphosphate hydrolases"/>
    <property type="match status" value="3"/>
</dbReference>
<dbReference type="Gene3D" id="4.10.860.10">
    <property type="entry name" value="UVR domain"/>
    <property type="match status" value="1"/>
</dbReference>
<dbReference type="HAMAP" id="MF_00204">
    <property type="entry name" value="UvrB"/>
    <property type="match status" value="1"/>
</dbReference>
<dbReference type="InterPro" id="IPR006935">
    <property type="entry name" value="Helicase/UvrB_N"/>
</dbReference>
<dbReference type="InterPro" id="IPR014001">
    <property type="entry name" value="Helicase_ATP-bd"/>
</dbReference>
<dbReference type="InterPro" id="IPR001650">
    <property type="entry name" value="Helicase_C-like"/>
</dbReference>
<dbReference type="InterPro" id="IPR027417">
    <property type="entry name" value="P-loop_NTPase"/>
</dbReference>
<dbReference type="InterPro" id="IPR001943">
    <property type="entry name" value="UVR_dom"/>
</dbReference>
<dbReference type="InterPro" id="IPR036876">
    <property type="entry name" value="UVR_dom_sf"/>
</dbReference>
<dbReference type="InterPro" id="IPR004807">
    <property type="entry name" value="UvrB"/>
</dbReference>
<dbReference type="InterPro" id="IPR041471">
    <property type="entry name" value="UvrB_inter"/>
</dbReference>
<dbReference type="InterPro" id="IPR024759">
    <property type="entry name" value="UvrB_YAD/RRR_dom"/>
</dbReference>
<dbReference type="NCBIfam" id="NF003673">
    <property type="entry name" value="PRK05298.1"/>
    <property type="match status" value="1"/>
</dbReference>
<dbReference type="NCBIfam" id="TIGR00631">
    <property type="entry name" value="uvrb"/>
    <property type="match status" value="1"/>
</dbReference>
<dbReference type="PANTHER" id="PTHR24029">
    <property type="entry name" value="UVRABC SYSTEM PROTEIN B"/>
    <property type="match status" value="1"/>
</dbReference>
<dbReference type="PANTHER" id="PTHR24029:SF0">
    <property type="entry name" value="UVRABC SYSTEM PROTEIN B"/>
    <property type="match status" value="1"/>
</dbReference>
<dbReference type="Pfam" id="PF00271">
    <property type="entry name" value="Helicase_C"/>
    <property type="match status" value="1"/>
</dbReference>
<dbReference type="Pfam" id="PF04851">
    <property type="entry name" value="ResIII"/>
    <property type="match status" value="1"/>
</dbReference>
<dbReference type="Pfam" id="PF02151">
    <property type="entry name" value="UVR"/>
    <property type="match status" value="1"/>
</dbReference>
<dbReference type="Pfam" id="PF12344">
    <property type="entry name" value="UvrB"/>
    <property type="match status" value="1"/>
</dbReference>
<dbReference type="Pfam" id="PF17757">
    <property type="entry name" value="UvrB_inter"/>
    <property type="match status" value="1"/>
</dbReference>
<dbReference type="SMART" id="SM00487">
    <property type="entry name" value="DEXDc"/>
    <property type="match status" value="1"/>
</dbReference>
<dbReference type="SMART" id="SM00490">
    <property type="entry name" value="HELICc"/>
    <property type="match status" value="1"/>
</dbReference>
<dbReference type="SUPFAM" id="SSF46600">
    <property type="entry name" value="C-terminal UvrC-binding domain of UvrB"/>
    <property type="match status" value="1"/>
</dbReference>
<dbReference type="SUPFAM" id="SSF52540">
    <property type="entry name" value="P-loop containing nucleoside triphosphate hydrolases"/>
    <property type="match status" value="2"/>
</dbReference>
<dbReference type="PROSITE" id="PS51192">
    <property type="entry name" value="HELICASE_ATP_BIND_1"/>
    <property type="match status" value="1"/>
</dbReference>
<dbReference type="PROSITE" id="PS51194">
    <property type="entry name" value="HELICASE_CTER"/>
    <property type="match status" value="1"/>
</dbReference>
<dbReference type="PROSITE" id="PS50151">
    <property type="entry name" value="UVR"/>
    <property type="match status" value="1"/>
</dbReference>
<proteinExistence type="inferred from homology"/>
<comment type="function">
    <text evidence="1">The UvrABC repair system catalyzes the recognition and processing of DNA lesions. A damage recognition complex composed of 2 UvrA and 2 UvrB subunits scans DNA for abnormalities. Upon binding of the UvrA(2)B(2) complex to a putative damaged site, the DNA wraps around one UvrB monomer. DNA wrap is dependent on ATP binding by UvrB and probably causes local melting of the DNA helix, facilitating insertion of UvrB beta-hairpin between the DNA strands. Then UvrB probes one DNA strand for the presence of a lesion. If a lesion is found the UvrA subunits dissociate and the UvrB-DNA preincision complex is formed. This complex is subsequently bound by UvrC and the second UvrB is released. If no lesion is found, the DNA wraps around the other UvrB subunit that will check the other stand for damage.</text>
</comment>
<comment type="subunit">
    <text evidence="1">Forms a heterotetramer with UvrA during the search for lesions. Interacts with UvrC in an incision complex.</text>
</comment>
<comment type="subcellular location">
    <subcellularLocation>
        <location evidence="1">Cytoplasm</location>
    </subcellularLocation>
</comment>
<comment type="domain">
    <text evidence="1">The beta-hairpin motif is involved in DNA binding.</text>
</comment>
<comment type="similarity">
    <text evidence="1">Belongs to the UvrB family.</text>
</comment>
<reference key="1">
    <citation type="journal article" date="2004" name="Nat. Biotechnol.">
        <title>Complete sequence and comparative genome analysis of the dairy bacterium Streptococcus thermophilus.</title>
        <authorList>
            <person name="Bolotin A."/>
            <person name="Quinquis B."/>
            <person name="Renault P."/>
            <person name="Sorokin A."/>
            <person name="Ehrlich S.D."/>
            <person name="Kulakauskas S."/>
            <person name="Lapidus A."/>
            <person name="Goltsman E."/>
            <person name="Mazur M."/>
            <person name="Pusch G.D."/>
            <person name="Fonstein M."/>
            <person name="Overbeek R."/>
            <person name="Kyprides N."/>
            <person name="Purnelle B."/>
            <person name="Prozzi D."/>
            <person name="Ngui K."/>
            <person name="Masuy D."/>
            <person name="Hancy F."/>
            <person name="Burteau S."/>
            <person name="Boutry M."/>
            <person name="Delcour J."/>
            <person name="Goffeau A."/>
            <person name="Hols P."/>
        </authorList>
    </citation>
    <scope>NUCLEOTIDE SEQUENCE [LARGE SCALE GENOMIC DNA]</scope>
    <source>
        <strain>CNRZ 1066</strain>
    </source>
</reference>
<sequence length="668" mass="76645">MKGKTMIDRKEDNQFHLVSKYEPSGDQPQAIETLVDNIKGGEKAQILKGATGTGKTYTMSQVIQRVNKPTLVIAHNKTLAGQLYGEFKEFFPDNAVEYFVSYYDYYQPEAYVPSSDTYIEKDSSINDEIDKLRHSATSALLERNDVIVVASVSCIYGLGSPKEYADSAVSLRPGQEISRDKLLNDLVDIQFERNDIDFQRGKFRVRGDVVEIFPASRDENAFRVEFFGDEIDRICEIESLTGRNLGEVEHLVLFPATHFMTNEEHMEEAIKNIMEEMEVQVNQFEAEGKLIEAQRIRQRTEYDVEMLREMGYTNGIENYSRHMDGRKEGEPPFTLLDFFPEDFLIMIDESHMTMGQIKGMYNGDQARKKMLVDYGFRLPSALDNRPLRREEFESHVHQIVYVSATPGDYEMEQTETVVEQIIRPTGLLDPEVEVRPTMGQMDDLLGEINARTEKGERVFVTTLTKKMAEDLTDYLKEMGVKVKYMHSDIKTLERTEIIRDLRLGVFDVLIGINLLREGIDVPEVSLVAILDADKEGFLRNERGLIQTIGRAARNSDGHVIMYADKITESMQKAMDETARRREIQMAYNKEHGITPQTIKKEIRDLISITKTNEAEVAEDTVNYSAMNKKERQEAIKKLQKQMHEAAELLDFELAAQIRDMVLELKSMD</sequence>
<feature type="chain" id="PRO_0000227370" description="UvrABC system protein B">
    <location>
        <begin position="1"/>
        <end position="668"/>
    </location>
</feature>
<feature type="domain" description="Helicase ATP-binding" evidence="1">
    <location>
        <begin position="36"/>
        <end position="423"/>
    </location>
</feature>
<feature type="domain" description="Helicase C-terminal" evidence="1">
    <location>
        <begin position="440"/>
        <end position="606"/>
    </location>
</feature>
<feature type="domain" description="UVR" evidence="1">
    <location>
        <begin position="632"/>
        <end position="667"/>
    </location>
</feature>
<feature type="short sequence motif" description="Beta-hairpin">
    <location>
        <begin position="102"/>
        <end position="125"/>
    </location>
</feature>
<feature type="binding site" evidence="1">
    <location>
        <begin position="49"/>
        <end position="56"/>
    </location>
    <ligand>
        <name>ATP</name>
        <dbReference type="ChEBI" id="CHEBI:30616"/>
    </ligand>
</feature>